<keyword id="KW-0053">Apoptosis</keyword>
<keyword id="KW-0067">ATP-binding</keyword>
<keyword id="KW-0963">Cytoplasm</keyword>
<keyword id="KW-0256">Endoplasmic reticulum</keyword>
<keyword id="KW-0418">Kinase</keyword>
<keyword id="KW-0547">Nucleotide-binding</keyword>
<keyword id="KW-0539">Nucleus</keyword>
<keyword id="KW-0597">Phosphoprotein</keyword>
<keyword id="KW-1185">Reference proteome</keyword>
<keyword id="KW-0723">Serine/threonine-protein kinase</keyword>
<keyword id="KW-0346">Stress response</keyword>
<keyword id="KW-0808">Transferase</keyword>
<sequence>MTVKTETAAGASTLTYSKMRGMVALLIAFMKQRRMGLNDFIQKIATNSSYACKPSEVQSILNISPPQEPELLNENSSPPPSPSQQINLGPSSNPHAKPSDFQFLKIIGKGSFGKVLLARHQADEKFYAVKVLQKKAILKKKEEKHIMSERNVLLKNVKHPFLVGLHFSFQTTSRLYFILDYINGGELFYHLQRERCFLEPRARFYAAEIASALGYLHSLNIVYRDLKPENILLDSQGHIVLTDFGLCKENIEPNGTTSTFCGTPEYLAPEVLHKQPYDRTVDWWCLGAVLYEMLYGLPPFYSRNTAEMYDNILNKPLQLKPNITNSARNLLEGLLQKDRTKRIGAKNDFMEIKNHIFFSPINWDDLINKKITPPFNPNVSGPSDLQHFDPEFTEEPVPNSIGQSPDSILITASIKEAAEAFMGFSYAPPMESYL</sequence>
<name>SGK1A_XENLA</name>
<proteinExistence type="evidence at transcript level"/>
<gene>
    <name type="primary">sgk1-a</name>
    <name type="synonym">sgk-a</name>
</gene>
<organism>
    <name type="scientific">Xenopus laevis</name>
    <name type="common">African clawed frog</name>
    <dbReference type="NCBI Taxonomy" id="8355"/>
    <lineage>
        <taxon>Eukaryota</taxon>
        <taxon>Metazoa</taxon>
        <taxon>Chordata</taxon>
        <taxon>Craniata</taxon>
        <taxon>Vertebrata</taxon>
        <taxon>Euteleostomi</taxon>
        <taxon>Amphibia</taxon>
        <taxon>Batrachia</taxon>
        <taxon>Anura</taxon>
        <taxon>Pipoidea</taxon>
        <taxon>Pipidae</taxon>
        <taxon>Xenopodinae</taxon>
        <taxon>Xenopus</taxon>
        <taxon>Xenopus</taxon>
    </lineage>
</organism>
<feature type="chain" id="PRO_0000380133" description="Serine/threonine-protein kinase Sgk1-A">
    <location>
        <begin position="1"/>
        <end position="434"/>
    </location>
</feature>
<feature type="domain" description="Protein kinase" evidence="2">
    <location>
        <begin position="101"/>
        <end position="358"/>
    </location>
</feature>
<feature type="domain" description="AGC-kinase C-terminal" evidence="3">
    <location>
        <begin position="359"/>
        <end position="434"/>
    </location>
</feature>
<feature type="region of interest" description="Disordered" evidence="5">
    <location>
        <begin position="66"/>
        <end position="94"/>
    </location>
</feature>
<feature type="compositionally biased region" description="Polar residues" evidence="5">
    <location>
        <begin position="84"/>
        <end position="94"/>
    </location>
</feature>
<feature type="active site" description="Proton acceptor" evidence="2 4">
    <location>
        <position position="225"/>
    </location>
</feature>
<feature type="binding site" evidence="2">
    <location>
        <begin position="107"/>
        <end position="115"/>
    </location>
    <ligand>
        <name>ATP</name>
        <dbReference type="ChEBI" id="CHEBI:30616"/>
    </ligand>
</feature>
<feature type="binding site" evidence="2">
    <location>
        <position position="130"/>
    </location>
    <ligand>
        <name>ATP</name>
        <dbReference type="ChEBI" id="CHEBI:30616"/>
    </ligand>
</feature>
<feature type="sequence conflict" description="In Ref. 1; AAC62398." evidence="7" ref="1">
    <original>A</original>
    <variation>S</variation>
    <location>
        <position position="122"/>
    </location>
</feature>
<reference key="1">
    <citation type="journal article" date="1999" name="Proc. Natl. Acad. Sci. U.S.A.">
        <title>Epithelial sodium channel regulated by aldosterone-induced protein sgk.</title>
        <authorList>
            <person name="Chen S.-Y."/>
            <person name="Bhargava A."/>
            <person name="Mastroberardino L."/>
            <person name="Meijer O.C."/>
            <person name="Wang J."/>
            <person name="Buse P."/>
            <person name="Firestone G.L."/>
            <person name="Verrey F."/>
            <person name="Pearce D."/>
        </authorList>
    </citation>
    <scope>NUCLEOTIDE SEQUENCE [MRNA]</scope>
    <scope>FUNCTION</scope>
    <scope>INDUCTION</scope>
    <source>
        <tissue>Kidney distal tubule</tissue>
    </source>
</reference>
<reference key="2">
    <citation type="submission" date="2004-06" db="EMBL/GenBank/DDBJ databases">
        <authorList>
            <consortium name="NIH - Xenopus Gene Collection (XGC) project"/>
        </authorList>
    </citation>
    <scope>NUCLEOTIDE SEQUENCE [LARGE SCALE MRNA]</scope>
    <source>
        <tissue>Embryo</tissue>
    </source>
</reference>
<evidence type="ECO:0000250" key="1"/>
<evidence type="ECO:0000255" key="2">
    <source>
        <dbReference type="PROSITE-ProRule" id="PRU00159"/>
    </source>
</evidence>
<evidence type="ECO:0000255" key="3">
    <source>
        <dbReference type="PROSITE-ProRule" id="PRU00618"/>
    </source>
</evidence>
<evidence type="ECO:0000255" key="4">
    <source>
        <dbReference type="PROSITE-ProRule" id="PRU10027"/>
    </source>
</evidence>
<evidence type="ECO:0000256" key="5">
    <source>
        <dbReference type="SAM" id="MobiDB-lite"/>
    </source>
</evidence>
<evidence type="ECO:0000269" key="6">
    <source>
    </source>
</evidence>
<evidence type="ECO:0000305" key="7"/>
<protein>
    <recommendedName>
        <fullName>Serine/threonine-protein kinase Sgk1-A</fullName>
        <ecNumber>2.7.11.1</ecNumber>
    </recommendedName>
    <alternativeName>
        <fullName>Serum/glucocorticoid-regulated kinase 1-A</fullName>
    </alternativeName>
</protein>
<accession>Q6GPN6</accession>
<accession>O93524</accession>
<comment type="function">
    <text evidence="1 6">Protein kinase that may play an important role in cellular stress response (By similarity). Plays an important role in activating certain potassium, sodium, and chloride channels, suggesting an involvement in the regulation of processes such as cell survival, neuronal excitability, and renal sodium excretion.</text>
</comment>
<comment type="catalytic activity">
    <reaction>
        <text>L-seryl-[protein] + ATP = O-phospho-L-seryl-[protein] + ADP + H(+)</text>
        <dbReference type="Rhea" id="RHEA:17989"/>
        <dbReference type="Rhea" id="RHEA-COMP:9863"/>
        <dbReference type="Rhea" id="RHEA-COMP:11604"/>
        <dbReference type="ChEBI" id="CHEBI:15378"/>
        <dbReference type="ChEBI" id="CHEBI:29999"/>
        <dbReference type="ChEBI" id="CHEBI:30616"/>
        <dbReference type="ChEBI" id="CHEBI:83421"/>
        <dbReference type="ChEBI" id="CHEBI:456216"/>
        <dbReference type="EC" id="2.7.11.1"/>
    </reaction>
</comment>
<comment type="catalytic activity">
    <reaction>
        <text>L-threonyl-[protein] + ATP = O-phospho-L-threonyl-[protein] + ADP + H(+)</text>
        <dbReference type="Rhea" id="RHEA:46608"/>
        <dbReference type="Rhea" id="RHEA-COMP:11060"/>
        <dbReference type="Rhea" id="RHEA-COMP:11605"/>
        <dbReference type="ChEBI" id="CHEBI:15378"/>
        <dbReference type="ChEBI" id="CHEBI:30013"/>
        <dbReference type="ChEBI" id="CHEBI:30616"/>
        <dbReference type="ChEBI" id="CHEBI:61977"/>
        <dbReference type="ChEBI" id="CHEBI:456216"/>
        <dbReference type="EC" id="2.7.11.1"/>
    </reaction>
</comment>
<comment type="subcellular location">
    <subcellularLocation>
        <location evidence="1">Cytoplasm</location>
    </subcellularLocation>
    <subcellularLocation>
        <location evidence="1">Nucleus</location>
    </subcellularLocation>
    <subcellularLocation>
        <location evidence="1">Endoplasmic reticulum</location>
    </subcellularLocation>
</comment>
<comment type="induction">
    <text evidence="6">Up-regulated by aldosterone and glucocorticoids.</text>
</comment>
<comment type="similarity">
    <text evidence="7">Belongs to the protein kinase superfamily. AGC Ser/Thr protein kinase family.</text>
</comment>
<dbReference type="EC" id="2.7.11.1"/>
<dbReference type="EMBL" id="AF057138">
    <property type="protein sequence ID" value="AAC62398.1"/>
    <property type="molecule type" value="mRNA"/>
</dbReference>
<dbReference type="EMBL" id="BC073077">
    <property type="protein sequence ID" value="AAH73077.1"/>
    <property type="molecule type" value="mRNA"/>
</dbReference>
<dbReference type="RefSeq" id="NP_001083809.1">
    <property type="nucleotide sequence ID" value="NM_001090340.1"/>
</dbReference>
<dbReference type="SMR" id="Q6GPN6"/>
<dbReference type="BioGRID" id="100455">
    <property type="interactions" value="1"/>
</dbReference>
<dbReference type="DNASU" id="399130"/>
<dbReference type="GeneID" id="399130"/>
<dbReference type="KEGG" id="xla:399130"/>
<dbReference type="AGR" id="Xenbase:XB-GENE-1003523"/>
<dbReference type="CTD" id="399130"/>
<dbReference type="Xenbase" id="XB-GENE-1003523">
    <property type="gene designation" value="sgk1.L"/>
</dbReference>
<dbReference type="OrthoDB" id="63267at2759"/>
<dbReference type="Proteomes" id="UP000186698">
    <property type="component" value="Chromosome 5L"/>
</dbReference>
<dbReference type="Bgee" id="399130">
    <property type="expression patterns" value="Expressed in camera-type eye and 18 other cell types or tissues"/>
</dbReference>
<dbReference type="GO" id="GO:0005737">
    <property type="term" value="C:cytoplasm"/>
    <property type="evidence" value="ECO:0000318"/>
    <property type="project" value="GO_Central"/>
</dbReference>
<dbReference type="GO" id="GO:0005783">
    <property type="term" value="C:endoplasmic reticulum"/>
    <property type="evidence" value="ECO:0007669"/>
    <property type="project" value="UniProtKB-SubCell"/>
</dbReference>
<dbReference type="GO" id="GO:0005634">
    <property type="term" value="C:nucleus"/>
    <property type="evidence" value="ECO:0000318"/>
    <property type="project" value="GO_Central"/>
</dbReference>
<dbReference type="GO" id="GO:0005524">
    <property type="term" value="F:ATP binding"/>
    <property type="evidence" value="ECO:0007669"/>
    <property type="project" value="UniProtKB-KW"/>
</dbReference>
<dbReference type="GO" id="GO:0106310">
    <property type="term" value="F:protein serine kinase activity"/>
    <property type="evidence" value="ECO:0007669"/>
    <property type="project" value="RHEA"/>
</dbReference>
<dbReference type="GO" id="GO:0004674">
    <property type="term" value="F:protein serine/threonine kinase activity"/>
    <property type="evidence" value="ECO:0000318"/>
    <property type="project" value="GO_Central"/>
</dbReference>
<dbReference type="GO" id="GO:0006915">
    <property type="term" value="P:apoptotic process"/>
    <property type="evidence" value="ECO:0007669"/>
    <property type="project" value="UniProtKB-KW"/>
</dbReference>
<dbReference type="CDD" id="cd05602">
    <property type="entry name" value="STKc_SGK1"/>
    <property type="match status" value="1"/>
</dbReference>
<dbReference type="FunFam" id="1.10.510.10:FF:000065">
    <property type="entry name" value="Non-specific serine/threonine protein kinase"/>
    <property type="match status" value="1"/>
</dbReference>
<dbReference type="FunFam" id="3.30.200.20:FF:000030">
    <property type="entry name" value="Non-specific serine/threonine protein kinase"/>
    <property type="match status" value="1"/>
</dbReference>
<dbReference type="Gene3D" id="3.30.200.20">
    <property type="entry name" value="Phosphorylase Kinase, domain 1"/>
    <property type="match status" value="1"/>
</dbReference>
<dbReference type="Gene3D" id="1.10.510.10">
    <property type="entry name" value="Transferase(Phosphotransferase) domain 1"/>
    <property type="match status" value="1"/>
</dbReference>
<dbReference type="InterPro" id="IPR000961">
    <property type="entry name" value="AGC-kinase_C"/>
</dbReference>
<dbReference type="InterPro" id="IPR011009">
    <property type="entry name" value="Kinase-like_dom_sf"/>
</dbReference>
<dbReference type="InterPro" id="IPR017892">
    <property type="entry name" value="Pkinase_C"/>
</dbReference>
<dbReference type="InterPro" id="IPR000719">
    <property type="entry name" value="Prot_kinase_dom"/>
</dbReference>
<dbReference type="InterPro" id="IPR017441">
    <property type="entry name" value="Protein_kinase_ATP_BS"/>
</dbReference>
<dbReference type="InterPro" id="IPR008271">
    <property type="entry name" value="Ser/Thr_kinase_AS"/>
</dbReference>
<dbReference type="PANTHER" id="PTHR24351">
    <property type="entry name" value="RIBOSOMAL PROTEIN S6 KINASE"/>
    <property type="match status" value="1"/>
</dbReference>
<dbReference type="Pfam" id="PF00069">
    <property type="entry name" value="Pkinase"/>
    <property type="match status" value="1"/>
</dbReference>
<dbReference type="Pfam" id="PF00433">
    <property type="entry name" value="Pkinase_C"/>
    <property type="match status" value="1"/>
</dbReference>
<dbReference type="SMART" id="SM00133">
    <property type="entry name" value="S_TK_X"/>
    <property type="match status" value="1"/>
</dbReference>
<dbReference type="SMART" id="SM00220">
    <property type="entry name" value="S_TKc"/>
    <property type="match status" value="1"/>
</dbReference>
<dbReference type="SUPFAM" id="SSF56112">
    <property type="entry name" value="Protein kinase-like (PK-like)"/>
    <property type="match status" value="1"/>
</dbReference>
<dbReference type="PROSITE" id="PS51285">
    <property type="entry name" value="AGC_KINASE_CTER"/>
    <property type="match status" value="1"/>
</dbReference>
<dbReference type="PROSITE" id="PS00107">
    <property type="entry name" value="PROTEIN_KINASE_ATP"/>
    <property type="match status" value="1"/>
</dbReference>
<dbReference type="PROSITE" id="PS50011">
    <property type="entry name" value="PROTEIN_KINASE_DOM"/>
    <property type="match status" value="1"/>
</dbReference>
<dbReference type="PROSITE" id="PS00108">
    <property type="entry name" value="PROTEIN_KINASE_ST"/>
    <property type="match status" value="1"/>
</dbReference>